<name>RK2_RHDSA</name>
<organism>
    <name type="scientific">Rhodomonas salina</name>
    <name type="common">Cryptomonas salina</name>
    <dbReference type="NCBI Taxonomy" id="52970"/>
    <lineage>
        <taxon>Eukaryota</taxon>
        <taxon>Cryptophyceae</taxon>
        <taxon>Pyrenomonadales</taxon>
        <taxon>Pyrenomonadaceae</taxon>
        <taxon>Rhodomonas</taxon>
    </lineage>
</organism>
<gene>
    <name type="primary">rpl2</name>
</gene>
<proteinExistence type="inferred from homology"/>
<keyword id="KW-0150">Chloroplast</keyword>
<keyword id="KW-0934">Plastid</keyword>
<keyword id="KW-0687">Ribonucleoprotein</keyword>
<keyword id="KW-0689">Ribosomal protein</keyword>
<dbReference type="EMBL" id="EF508371">
    <property type="protein sequence ID" value="ABO70767.1"/>
    <property type="molecule type" value="Genomic_DNA"/>
</dbReference>
<dbReference type="RefSeq" id="YP_001293583.1">
    <property type="nucleotide sequence ID" value="NC_009573.1"/>
</dbReference>
<dbReference type="SMR" id="A6MW04"/>
<dbReference type="GeneID" id="5228523"/>
<dbReference type="GO" id="GO:0009507">
    <property type="term" value="C:chloroplast"/>
    <property type="evidence" value="ECO:0007669"/>
    <property type="project" value="UniProtKB-SubCell"/>
</dbReference>
<dbReference type="GO" id="GO:0005762">
    <property type="term" value="C:mitochondrial large ribosomal subunit"/>
    <property type="evidence" value="ECO:0007669"/>
    <property type="project" value="TreeGrafter"/>
</dbReference>
<dbReference type="GO" id="GO:0019843">
    <property type="term" value="F:rRNA binding"/>
    <property type="evidence" value="ECO:0007669"/>
    <property type="project" value="UniProtKB-UniRule"/>
</dbReference>
<dbReference type="GO" id="GO:0003735">
    <property type="term" value="F:structural constituent of ribosome"/>
    <property type="evidence" value="ECO:0007669"/>
    <property type="project" value="InterPro"/>
</dbReference>
<dbReference type="GO" id="GO:0016740">
    <property type="term" value="F:transferase activity"/>
    <property type="evidence" value="ECO:0007669"/>
    <property type="project" value="InterPro"/>
</dbReference>
<dbReference type="GO" id="GO:0032543">
    <property type="term" value="P:mitochondrial translation"/>
    <property type="evidence" value="ECO:0007669"/>
    <property type="project" value="TreeGrafter"/>
</dbReference>
<dbReference type="FunFam" id="2.30.30.30:FF:000001">
    <property type="entry name" value="50S ribosomal protein L2"/>
    <property type="match status" value="1"/>
</dbReference>
<dbReference type="FunFam" id="2.40.50.140:FF:000003">
    <property type="entry name" value="50S ribosomal protein L2"/>
    <property type="match status" value="1"/>
</dbReference>
<dbReference type="FunFam" id="4.10.950.10:FF:000001">
    <property type="entry name" value="50S ribosomal protein L2"/>
    <property type="match status" value="1"/>
</dbReference>
<dbReference type="Gene3D" id="2.30.30.30">
    <property type="match status" value="1"/>
</dbReference>
<dbReference type="Gene3D" id="2.40.50.140">
    <property type="entry name" value="Nucleic acid-binding proteins"/>
    <property type="match status" value="1"/>
</dbReference>
<dbReference type="Gene3D" id="4.10.950.10">
    <property type="entry name" value="Ribosomal protein L2, domain 3"/>
    <property type="match status" value="1"/>
</dbReference>
<dbReference type="HAMAP" id="MF_01320_B">
    <property type="entry name" value="Ribosomal_uL2_B"/>
    <property type="match status" value="1"/>
</dbReference>
<dbReference type="InterPro" id="IPR012340">
    <property type="entry name" value="NA-bd_OB-fold"/>
</dbReference>
<dbReference type="InterPro" id="IPR014722">
    <property type="entry name" value="Rib_uL2_dom2"/>
</dbReference>
<dbReference type="InterPro" id="IPR002171">
    <property type="entry name" value="Ribosomal_uL2"/>
</dbReference>
<dbReference type="InterPro" id="IPR005880">
    <property type="entry name" value="Ribosomal_uL2_bac/org-type"/>
</dbReference>
<dbReference type="InterPro" id="IPR022669">
    <property type="entry name" value="Ribosomal_uL2_C"/>
</dbReference>
<dbReference type="InterPro" id="IPR022671">
    <property type="entry name" value="Ribosomal_uL2_CS"/>
</dbReference>
<dbReference type="InterPro" id="IPR014726">
    <property type="entry name" value="Ribosomal_uL2_dom3"/>
</dbReference>
<dbReference type="InterPro" id="IPR022666">
    <property type="entry name" value="Ribosomal_uL2_RNA-bd_dom"/>
</dbReference>
<dbReference type="InterPro" id="IPR008991">
    <property type="entry name" value="Translation_prot_SH3-like_sf"/>
</dbReference>
<dbReference type="NCBIfam" id="TIGR01171">
    <property type="entry name" value="rplB_bact"/>
    <property type="match status" value="1"/>
</dbReference>
<dbReference type="PANTHER" id="PTHR13691:SF5">
    <property type="entry name" value="LARGE RIBOSOMAL SUBUNIT PROTEIN UL2M"/>
    <property type="match status" value="1"/>
</dbReference>
<dbReference type="PANTHER" id="PTHR13691">
    <property type="entry name" value="RIBOSOMAL PROTEIN L2"/>
    <property type="match status" value="1"/>
</dbReference>
<dbReference type="Pfam" id="PF00181">
    <property type="entry name" value="Ribosomal_L2"/>
    <property type="match status" value="1"/>
</dbReference>
<dbReference type="Pfam" id="PF03947">
    <property type="entry name" value="Ribosomal_L2_C"/>
    <property type="match status" value="1"/>
</dbReference>
<dbReference type="PIRSF" id="PIRSF002158">
    <property type="entry name" value="Ribosomal_L2"/>
    <property type="match status" value="1"/>
</dbReference>
<dbReference type="SMART" id="SM01383">
    <property type="entry name" value="Ribosomal_L2"/>
    <property type="match status" value="1"/>
</dbReference>
<dbReference type="SMART" id="SM01382">
    <property type="entry name" value="Ribosomal_L2_C"/>
    <property type="match status" value="1"/>
</dbReference>
<dbReference type="SUPFAM" id="SSF50249">
    <property type="entry name" value="Nucleic acid-binding proteins"/>
    <property type="match status" value="1"/>
</dbReference>
<dbReference type="SUPFAM" id="SSF50104">
    <property type="entry name" value="Translation proteins SH3-like domain"/>
    <property type="match status" value="1"/>
</dbReference>
<dbReference type="PROSITE" id="PS00467">
    <property type="entry name" value="RIBOSOMAL_L2"/>
    <property type="match status" value="1"/>
</dbReference>
<sequence length="275" mass="30356">MGIRIYRSYTPGTRNRSSSDFSEITKSKPEKSLLAKKTQKAGRNHRGVITVRHRGGGHKQRYRIVDFKRNKRDIEAKVASIQYDPNRNARIALLHYKDGEKRYILAPKNLSVGAQVSAGETAPLDVGNALPLSNIPLGTSVHNIELLPGKGGQIIRAAGTSAQIVAKEGNFVTLKLPSSEVRMVYKQCYATIGEVGNAEFKNLTLGKAGRKRWLGIRPTVRGVVMNPCDHPHGGGEGRSPIGRARPVTPWGAPALGMKTRRKNKYSDFCIIRRRK</sequence>
<accession>A6MW04</accession>
<reference key="1">
    <citation type="journal article" date="2007" name="Mol. Biol. Evol.">
        <title>Plastid genome sequence of the cryptophyte alga Rhodomonas salina CCMP1319: lateral transfer of putative DNA replication machinery and a test of chromist plastid phylogeny.</title>
        <authorList>
            <person name="Khan H."/>
            <person name="Parks N."/>
            <person name="Kozera C."/>
            <person name="Curtis B.A."/>
            <person name="Parsons B.J."/>
            <person name="Bowman S."/>
            <person name="Archibald J.M."/>
        </authorList>
    </citation>
    <scope>NUCLEOTIDE SEQUENCE [LARGE SCALE GENOMIC DNA]</scope>
    <source>
        <strain>CCMP1319 / NEPCC76 / CS-174</strain>
    </source>
</reference>
<geneLocation type="chloroplast"/>
<comment type="subunit">
    <text evidence="1">Part of the 50S ribosomal subunit.</text>
</comment>
<comment type="subcellular location">
    <subcellularLocation>
        <location>Plastid</location>
        <location>Chloroplast</location>
    </subcellularLocation>
</comment>
<comment type="similarity">
    <text evidence="4">Belongs to the universal ribosomal protein uL2 family.</text>
</comment>
<feature type="chain" id="PRO_0000310091" description="Large ribosomal subunit protein uL2c">
    <location>
        <begin position="1"/>
        <end position="275"/>
    </location>
</feature>
<feature type="region of interest" description="Disordered" evidence="3">
    <location>
        <begin position="1"/>
        <end position="28"/>
    </location>
</feature>
<feature type="region of interest" description="Disordered" evidence="3">
    <location>
        <begin position="227"/>
        <end position="251"/>
    </location>
</feature>
<feature type="compositionally biased region" description="Polar residues" evidence="3">
    <location>
        <begin position="10"/>
        <end position="22"/>
    </location>
</feature>
<evidence type="ECO:0000250" key="1"/>
<evidence type="ECO:0000255" key="2">
    <source>
        <dbReference type="HAMAP-Rule" id="MF_01320"/>
    </source>
</evidence>
<evidence type="ECO:0000256" key="3">
    <source>
        <dbReference type="SAM" id="MobiDB-lite"/>
    </source>
</evidence>
<evidence type="ECO:0000305" key="4"/>
<protein>
    <recommendedName>
        <fullName evidence="2">Large ribosomal subunit protein uL2c</fullName>
    </recommendedName>
    <alternativeName>
        <fullName evidence="4">50S ribosomal protein L2, chloroplastic</fullName>
    </alternativeName>
</protein>